<gene>
    <name type="primary">Kntc1</name>
    <name type="synonym">Kiaa0166</name>
</gene>
<sequence length="2207" mass="250358">MWNNIELLTSDDTGSGCLSVGSRKENVTALYQADLLGKISSEKTSLSPKIQAFSLSHGFIIVADQSVILLDSICRSLQLFLIFDTDVDVVGLCQEGKFLFVGERSGNFHLIYVTSKQTLFTKAFVEKALDESQRTYRNLIIEKDGSNEGTYYMLLLTNNGFFYITNLQLSQIEQAIENTDLDSAKKLQGQFKCSFISTENYHSCLSLVASQSGTFASKTSVIIGGTGSCAFSKWEPDSTKKEMSLKNFVGTDIIKGAKSFQLIDNLLFVLDTDNVLSLWDAYTLTPVWNWPSLPVEQFVLTTEADSPSSVTWQGITNLKLVTLTATAKEKMRSLIIYSLPSMETLYSLEVSSVSSLVQTGISTDTIYLLEGIHKNDPNLCEDSVSDLVLRYLTEVLPENRLSRLLHKHRFAEAESFAIQFGLDVELVYKVKSNDMLEKLALISSDKSEQSKWQQLVDEAKENLCKIQDDDFVVNFCLKAQWVTYETTQEMLSYAKTRLMKKEDRALPASSDAFMEVLKAHAKLTTFYGAFGPEKFSGSSWIEFLNNEDDLRDVFLQLSEGNFACAQYLWLRHRADFESKFDVKMLENLLNSISTQFPLENLCSWFKNEVIPFVRRIVPEGQNILAKWLEQASRNLELTDKANWPENGLQLAEVFFTAEKTDRFGFASSWHWISLDYQNTEEVRQLRTLVSKLRELIILHRKYNCKLALSDFEKENATTVVFRMFDRVSAPELIPSVLEKSVRVYIREQNLQEEELLLLYIEDLLKRCSSKSMTLFDTAWEAKAMAVIRCLSDTDLIFDAVLKIMYKAVVPWSAAVEQLVKQHLEMDHPKVKLLQESYKLMEMKKLLRGYGIREVNLLNKEIMRVIRYILKQDIPSSLEDALKVAQGYRLSDDEIYSLRIIDLIDREQGGDCLLLLKSLPAAEAEKTAERVIIWARLALQEEPDGSEEDKAWRISVAKTSVDILKILCDIRKDNLQKKDESEEFLKRFQMVASLQENFEVFLPFEDYSNTALVAGLREQYIKAQEAAQAEHKHRGPPGPTPARGTHLSIKSKLHRQALALQVSEQELEAELTLRALKDGKVVAALSKCRDLLKHYCNADTGRLLFVVCQKLCQMLADDVPMVAPGGLSLPSEIHDLACHAVTICSPDYLLDVLELSKYTLTAVELCRQCQMDDCGMLMKAALGTHKDPYEEWSFSDFFSEDGIVLESQVVLPVIYELISSVMPPAESKRHPLDSISLPYCSTSEGENRILPLVSSISALLRSLQECSQWELALRFVVGSFGTCLQHSMSNVMSISLSKQLLGKNTLANSRHIIMELKEKSITFIRENATTLLHKVFNCRVVDLDLALAYCTLLPQKDVFDNLWKFIDKAWQNYDKILALSLVGSQLANLYQDIETGLWFHELSIDAKWGIRLGKLGISFQPAFRQNFLTKKDLIKALVNNIDMDTSLILEYCSTFQLDSDAALRLFIETLLRNTSSQSQGDAAPESTKHQHSKLLAKATELVPLLKNTKDLVISLSEILYKLDPYDYEMIDVVLKVLEQANEKITSVNINQALNLLRHLKSYRRISPPVDHEYQYALEHMITLPPAAHTRLPFHLILFGTAQNFWKILSSELSEESLPTLLLIAKLMKFSLDTLYVSTAKHLFEKNLKPKLLKSAQARSSTLMSKEVDKLMQTLESYLLSIVNPEWAVAIAISLTQEVPEGPFKMSSLKFCLYLAERWLQNIPPQDETCEKAKALQKKLCLQVRLSGTEAVLIAHKLNDQEYLRVIGKPAHLIVSLYEHPSISERLCTTSGKDYPDIHTAAKEIAEVNEVNLEKIWDMLLEKWLCPSTVPSEKASEFFELEEDEVLHRVVYLLQARPVDYCSRMLFVFATSATSTLGMRQLTFAHKARALQCLLYLADKETIESLFKKPIKEMKSYLKCITFLASFETLNIPITYELFCNSPKEGMIKGLWKNHSHEPMAVRLVAELCLEYKIYDLQLWNGLLQKLLGFNMIPYLRKVLSCISSIHSLWQVPYFSKAWQRVIQIPLLSASCPLRPSQLADCCDSLVAILECPVSDDLDMMGVAKQYVQLDLPAFALTCLTLMPHSEKRHQQIKNFLNSCDARIILQQIEEHMNTGQLAGFSHQIGSLVLNHVVNKKEFGILAKTKYFQLLKCHVINTGNVTELVNYLANDFSVDEASALINEYSKHCGKPVPADAAPCEILQTFLGGS</sequence>
<accession>Q8C3Y4</accession>
<accession>Q6A0B3</accession>
<evidence type="ECO:0000250" key="1">
    <source>
        <dbReference type="UniProtKB" id="P50748"/>
    </source>
</evidence>
<evidence type="ECO:0000256" key="2">
    <source>
        <dbReference type="SAM" id="MobiDB-lite"/>
    </source>
</evidence>
<evidence type="ECO:0000305" key="3"/>
<feature type="chain" id="PRO_0000084313" description="Kinetochore-associated protein 1">
    <location>
        <begin position="1"/>
        <end position="2207"/>
    </location>
</feature>
<feature type="region of interest" description="Disordered" evidence="2">
    <location>
        <begin position="1024"/>
        <end position="1045"/>
    </location>
</feature>
<feature type="modified residue" description="Phosphothreonine" evidence="1">
    <location>
        <position position="13"/>
    </location>
</feature>
<feature type="modified residue" description="Phosphoserine" evidence="1">
    <location>
        <position position="15"/>
    </location>
</feature>
<feature type="sequence conflict" description="In Ref. 3; BAC39211." evidence="3" ref="3">
    <original>G</original>
    <variation>E</variation>
    <location>
        <position position="2187"/>
    </location>
</feature>
<proteinExistence type="evidence at protein level"/>
<keyword id="KW-0131">Cell cycle</keyword>
<keyword id="KW-0132">Cell division</keyword>
<keyword id="KW-0137">Centromere</keyword>
<keyword id="KW-0158">Chromosome</keyword>
<keyword id="KW-0963">Cytoplasm</keyword>
<keyword id="KW-0206">Cytoskeleton</keyword>
<keyword id="KW-0903">Direct protein sequencing</keyword>
<keyword id="KW-0995">Kinetochore</keyword>
<keyword id="KW-0498">Mitosis</keyword>
<keyword id="KW-0539">Nucleus</keyword>
<keyword id="KW-0597">Phosphoprotein</keyword>
<keyword id="KW-1185">Reference proteome</keyword>
<protein>
    <recommendedName>
        <fullName>Kinetochore-associated protein 1</fullName>
    </recommendedName>
</protein>
<name>KNTC1_MOUSE</name>
<reference key="1">
    <citation type="journal article" date="2004" name="DNA Res.">
        <title>Prediction of the coding sequences of mouse homologues of KIAA gene: IV. The complete nucleotide sequences of 500 mouse KIAA-homologous cDNAs identified by screening of terminal sequences of cDNA clones randomly sampled from size-fractionated libraries.</title>
        <authorList>
            <person name="Okazaki N."/>
            <person name="Kikuno R."/>
            <person name="Ohara R."/>
            <person name="Inamoto S."/>
            <person name="Koseki H."/>
            <person name="Hiraoka S."/>
            <person name="Saga Y."/>
            <person name="Seino S."/>
            <person name="Nishimura M."/>
            <person name="Kaisho T."/>
            <person name="Hoshino K."/>
            <person name="Kitamura H."/>
            <person name="Nagase T."/>
            <person name="Ohara O."/>
            <person name="Koga H."/>
        </authorList>
    </citation>
    <scope>NUCLEOTIDE SEQUENCE [LARGE SCALE MRNA]</scope>
    <source>
        <tissue>Embryonic intestine</tissue>
    </source>
</reference>
<reference key="2">
    <citation type="submission" date="2009-01" db="UniProtKB">
        <authorList>
            <person name="Lubec G."/>
            <person name="Sunyer B."/>
            <person name="Chen W.-Q."/>
        </authorList>
    </citation>
    <scope>PROTEIN SEQUENCE OF 839-843 AND 1650-1657</scope>
    <scope>IDENTIFICATION BY MASS SPECTROMETRY</scope>
    <source>
        <strain>OF1</strain>
        <tissue>Hippocampus</tissue>
    </source>
</reference>
<reference key="3">
    <citation type="journal article" date="2005" name="Science">
        <title>The transcriptional landscape of the mammalian genome.</title>
        <authorList>
            <person name="Carninci P."/>
            <person name="Kasukawa T."/>
            <person name="Katayama S."/>
            <person name="Gough J."/>
            <person name="Frith M.C."/>
            <person name="Maeda N."/>
            <person name="Oyama R."/>
            <person name="Ravasi T."/>
            <person name="Lenhard B."/>
            <person name="Wells C."/>
            <person name="Kodzius R."/>
            <person name="Shimokawa K."/>
            <person name="Bajic V.B."/>
            <person name="Brenner S.E."/>
            <person name="Batalov S."/>
            <person name="Forrest A.R."/>
            <person name="Zavolan M."/>
            <person name="Davis M.J."/>
            <person name="Wilming L.G."/>
            <person name="Aidinis V."/>
            <person name="Allen J.E."/>
            <person name="Ambesi-Impiombato A."/>
            <person name="Apweiler R."/>
            <person name="Aturaliya R.N."/>
            <person name="Bailey T.L."/>
            <person name="Bansal M."/>
            <person name="Baxter L."/>
            <person name="Beisel K.W."/>
            <person name="Bersano T."/>
            <person name="Bono H."/>
            <person name="Chalk A.M."/>
            <person name="Chiu K.P."/>
            <person name="Choudhary V."/>
            <person name="Christoffels A."/>
            <person name="Clutterbuck D.R."/>
            <person name="Crowe M.L."/>
            <person name="Dalla E."/>
            <person name="Dalrymple B.P."/>
            <person name="de Bono B."/>
            <person name="Della Gatta G."/>
            <person name="di Bernardo D."/>
            <person name="Down T."/>
            <person name="Engstrom P."/>
            <person name="Fagiolini M."/>
            <person name="Faulkner G."/>
            <person name="Fletcher C.F."/>
            <person name="Fukushima T."/>
            <person name="Furuno M."/>
            <person name="Futaki S."/>
            <person name="Gariboldi M."/>
            <person name="Georgii-Hemming P."/>
            <person name="Gingeras T.R."/>
            <person name="Gojobori T."/>
            <person name="Green R.E."/>
            <person name="Gustincich S."/>
            <person name="Harbers M."/>
            <person name="Hayashi Y."/>
            <person name="Hensch T.K."/>
            <person name="Hirokawa N."/>
            <person name="Hill D."/>
            <person name="Huminiecki L."/>
            <person name="Iacono M."/>
            <person name="Ikeo K."/>
            <person name="Iwama A."/>
            <person name="Ishikawa T."/>
            <person name="Jakt M."/>
            <person name="Kanapin A."/>
            <person name="Katoh M."/>
            <person name="Kawasawa Y."/>
            <person name="Kelso J."/>
            <person name="Kitamura H."/>
            <person name="Kitano H."/>
            <person name="Kollias G."/>
            <person name="Krishnan S.P."/>
            <person name="Kruger A."/>
            <person name="Kummerfeld S.K."/>
            <person name="Kurochkin I.V."/>
            <person name="Lareau L.F."/>
            <person name="Lazarevic D."/>
            <person name="Lipovich L."/>
            <person name="Liu J."/>
            <person name="Liuni S."/>
            <person name="McWilliam S."/>
            <person name="Madan Babu M."/>
            <person name="Madera M."/>
            <person name="Marchionni L."/>
            <person name="Matsuda H."/>
            <person name="Matsuzawa S."/>
            <person name="Miki H."/>
            <person name="Mignone F."/>
            <person name="Miyake S."/>
            <person name="Morris K."/>
            <person name="Mottagui-Tabar S."/>
            <person name="Mulder N."/>
            <person name="Nakano N."/>
            <person name="Nakauchi H."/>
            <person name="Ng P."/>
            <person name="Nilsson R."/>
            <person name="Nishiguchi S."/>
            <person name="Nishikawa S."/>
            <person name="Nori F."/>
            <person name="Ohara O."/>
            <person name="Okazaki Y."/>
            <person name="Orlando V."/>
            <person name="Pang K.C."/>
            <person name="Pavan W.J."/>
            <person name="Pavesi G."/>
            <person name="Pesole G."/>
            <person name="Petrovsky N."/>
            <person name="Piazza S."/>
            <person name="Reed J."/>
            <person name="Reid J.F."/>
            <person name="Ring B.Z."/>
            <person name="Ringwald M."/>
            <person name="Rost B."/>
            <person name="Ruan Y."/>
            <person name="Salzberg S.L."/>
            <person name="Sandelin A."/>
            <person name="Schneider C."/>
            <person name="Schoenbach C."/>
            <person name="Sekiguchi K."/>
            <person name="Semple C.A."/>
            <person name="Seno S."/>
            <person name="Sessa L."/>
            <person name="Sheng Y."/>
            <person name="Shibata Y."/>
            <person name="Shimada H."/>
            <person name="Shimada K."/>
            <person name="Silva D."/>
            <person name="Sinclair B."/>
            <person name="Sperling S."/>
            <person name="Stupka E."/>
            <person name="Sugiura K."/>
            <person name="Sultana R."/>
            <person name="Takenaka Y."/>
            <person name="Taki K."/>
            <person name="Tammoja K."/>
            <person name="Tan S.L."/>
            <person name="Tang S."/>
            <person name="Taylor M.S."/>
            <person name="Tegner J."/>
            <person name="Teichmann S.A."/>
            <person name="Ueda H.R."/>
            <person name="van Nimwegen E."/>
            <person name="Verardo R."/>
            <person name="Wei C.L."/>
            <person name="Yagi K."/>
            <person name="Yamanishi H."/>
            <person name="Zabarovsky E."/>
            <person name="Zhu S."/>
            <person name="Zimmer A."/>
            <person name="Hide W."/>
            <person name="Bult C."/>
            <person name="Grimmond S.M."/>
            <person name="Teasdale R.D."/>
            <person name="Liu E.T."/>
            <person name="Brusic V."/>
            <person name="Quackenbush J."/>
            <person name="Wahlestedt C."/>
            <person name="Mattick J.S."/>
            <person name="Hume D.A."/>
            <person name="Kai C."/>
            <person name="Sasaki D."/>
            <person name="Tomaru Y."/>
            <person name="Fukuda S."/>
            <person name="Kanamori-Katayama M."/>
            <person name="Suzuki M."/>
            <person name="Aoki J."/>
            <person name="Arakawa T."/>
            <person name="Iida J."/>
            <person name="Imamura K."/>
            <person name="Itoh M."/>
            <person name="Kato T."/>
            <person name="Kawaji H."/>
            <person name="Kawagashira N."/>
            <person name="Kawashima T."/>
            <person name="Kojima M."/>
            <person name="Kondo S."/>
            <person name="Konno H."/>
            <person name="Nakano K."/>
            <person name="Ninomiya N."/>
            <person name="Nishio T."/>
            <person name="Okada M."/>
            <person name="Plessy C."/>
            <person name="Shibata K."/>
            <person name="Shiraki T."/>
            <person name="Suzuki S."/>
            <person name="Tagami M."/>
            <person name="Waki K."/>
            <person name="Watahiki A."/>
            <person name="Okamura-Oho Y."/>
            <person name="Suzuki H."/>
            <person name="Kawai J."/>
            <person name="Hayashizaki Y."/>
        </authorList>
    </citation>
    <scope>NUCLEOTIDE SEQUENCE [LARGE SCALE MRNA] OF 1484-2207</scope>
    <source>
        <strain>C57BL/6J</strain>
        <tissue>Heart</tissue>
    </source>
</reference>
<reference key="4">
    <citation type="journal article" date="2010" name="Cell">
        <title>A tissue-specific atlas of mouse protein phosphorylation and expression.</title>
        <authorList>
            <person name="Huttlin E.L."/>
            <person name="Jedrychowski M.P."/>
            <person name="Elias J.E."/>
            <person name="Goswami T."/>
            <person name="Rad R."/>
            <person name="Beausoleil S.A."/>
            <person name="Villen J."/>
            <person name="Haas W."/>
            <person name="Sowa M.E."/>
            <person name="Gygi S.P."/>
        </authorList>
    </citation>
    <scope>IDENTIFICATION BY MASS SPECTROMETRY [LARGE SCALE ANALYSIS]</scope>
    <source>
        <tissue>Kidney</tissue>
        <tissue>Pancreas</tissue>
        <tissue>Spleen</tissue>
        <tissue>Testis</tissue>
    </source>
</reference>
<comment type="function">
    <text evidence="1">Essential component of the mitotic checkpoint, which prevents cells from prematurely exiting mitosis. Required for the assembly of the dynein-dynactin and MAD1-MAD2 complexes onto kinetochores. Its function related to the spindle assembly machinery is proposed to depend on its association in the mitotic RZZ complex (By similarity).</text>
</comment>
<comment type="subunit">
    <text evidence="1">Interacts with ZW10. This interaction is required for stable association with the kinetochore. Component of the RZZ complex composed of KNTC1/ROD, ZW10 and ZWILCH (By similarity).</text>
</comment>
<comment type="subcellular location">
    <subcellularLocation>
        <location evidence="1">Cytoplasm</location>
    </subcellularLocation>
    <subcellularLocation>
        <location evidence="1">Nucleus</location>
    </subcellularLocation>
    <subcellularLocation>
        <location evidence="1">Chromosome</location>
        <location evidence="1">Centromere</location>
        <location evidence="1">Kinetochore</location>
    </subcellularLocation>
    <subcellularLocation>
        <location evidence="1">Cytoplasm</location>
        <location evidence="1">Cytoskeleton</location>
        <location evidence="1">Spindle</location>
    </subcellularLocation>
</comment>
<comment type="sequence caution" evidence="3">
    <conflict type="erroneous initiation">
        <sequence resource="EMBL-CDS" id="BAD32183"/>
    </conflict>
</comment>
<dbReference type="EMBL" id="AK172905">
    <property type="protein sequence ID" value="BAD32183.1"/>
    <property type="status" value="ALT_INIT"/>
    <property type="molecule type" value="mRNA"/>
</dbReference>
<dbReference type="EMBL" id="AK084529">
    <property type="protein sequence ID" value="BAC39211.1"/>
    <property type="molecule type" value="mRNA"/>
</dbReference>
<dbReference type="CCDS" id="CCDS39274.1"/>
<dbReference type="RefSeq" id="NP_001035886.1">
    <property type="nucleotide sequence ID" value="NM_001042421.1"/>
</dbReference>
<dbReference type="SMR" id="Q8C3Y4"/>
<dbReference type="BioGRID" id="228995">
    <property type="interactions" value="8"/>
</dbReference>
<dbReference type="FunCoup" id="Q8C3Y4">
    <property type="interactions" value="1202"/>
</dbReference>
<dbReference type="IntAct" id="Q8C3Y4">
    <property type="interactions" value="3"/>
</dbReference>
<dbReference type="MINT" id="Q8C3Y4"/>
<dbReference type="STRING" id="10090.ENSMUSP00000031366"/>
<dbReference type="GlyGen" id="Q8C3Y4">
    <property type="glycosylation" value="1 site"/>
</dbReference>
<dbReference type="iPTMnet" id="Q8C3Y4"/>
<dbReference type="PhosphoSitePlus" id="Q8C3Y4"/>
<dbReference type="SwissPalm" id="Q8C3Y4"/>
<dbReference type="PaxDb" id="10090-ENSMUSP00000031366"/>
<dbReference type="PeptideAtlas" id="Q8C3Y4"/>
<dbReference type="ProteomicsDB" id="263673"/>
<dbReference type="Pumba" id="Q8C3Y4"/>
<dbReference type="Antibodypedia" id="9885">
    <property type="antibodies" value="127 antibodies from 19 providers"/>
</dbReference>
<dbReference type="Ensembl" id="ENSMUST00000031366.12">
    <property type="protein sequence ID" value="ENSMUSP00000031366.8"/>
    <property type="gene ID" value="ENSMUSG00000029414.12"/>
</dbReference>
<dbReference type="GeneID" id="208628"/>
<dbReference type="KEGG" id="mmu:208628"/>
<dbReference type="UCSC" id="uc008zoo.1">
    <property type="organism name" value="mouse"/>
</dbReference>
<dbReference type="AGR" id="MGI:2673709"/>
<dbReference type="CTD" id="9735"/>
<dbReference type="MGI" id="MGI:2673709">
    <property type="gene designation" value="Kntc1"/>
</dbReference>
<dbReference type="VEuPathDB" id="HostDB:ENSMUSG00000029414"/>
<dbReference type="eggNOG" id="KOG4256">
    <property type="taxonomic scope" value="Eukaryota"/>
</dbReference>
<dbReference type="GeneTree" id="ENSGT00390000007883"/>
<dbReference type="HOGENOM" id="CLU_231522_0_0_1"/>
<dbReference type="InParanoid" id="Q8C3Y4"/>
<dbReference type="OMA" id="FYELYLC"/>
<dbReference type="OrthoDB" id="343783at2759"/>
<dbReference type="PhylomeDB" id="Q8C3Y4"/>
<dbReference type="TreeFam" id="TF101176"/>
<dbReference type="Reactome" id="R-MMU-141444">
    <property type="pathway name" value="Amplification of signal from unattached kinetochores via a MAD2 inhibitory signal"/>
</dbReference>
<dbReference type="Reactome" id="R-MMU-2467813">
    <property type="pathway name" value="Separation of Sister Chromatids"/>
</dbReference>
<dbReference type="Reactome" id="R-MMU-2500257">
    <property type="pathway name" value="Resolution of Sister Chromatid Cohesion"/>
</dbReference>
<dbReference type="Reactome" id="R-MMU-5663220">
    <property type="pathway name" value="RHO GTPases Activate Formins"/>
</dbReference>
<dbReference type="Reactome" id="R-MMU-68877">
    <property type="pathway name" value="Mitotic Prometaphase"/>
</dbReference>
<dbReference type="Reactome" id="R-MMU-9648025">
    <property type="pathway name" value="EML4 and NUDC in mitotic spindle formation"/>
</dbReference>
<dbReference type="BioGRID-ORCS" id="208628">
    <property type="hits" value="17 hits in 79 CRISPR screens"/>
</dbReference>
<dbReference type="ChiTaRS" id="Kntc1">
    <property type="organism name" value="mouse"/>
</dbReference>
<dbReference type="PRO" id="PR:Q8C3Y4"/>
<dbReference type="Proteomes" id="UP000000589">
    <property type="component" value="Chromosome 5"/>
</dbReference>
<dbReference type="RNAct" id="Q8C3Y4">
    <property type="molecule type" value="protein"/>
</dbReference>
<dbReference type="Bgee" id="ENSMUSG00000029414">
    <property type="expression patterns" value="Expressed in manus and 157 other cell types or tissues"/>
</dbReference>
<dbReference type="ExpressionAtlas" id="Q8C3Y4">
    <property type="expression patterns" value="baseline and differential"/>
</dbReference>
<dbReference type="GO" id="GO:0015629">
    <property type="term" value="C:actin cytoskeleton"/>
    <property type="evidence" value="ECO:0007669"/>
    <property type="project" value="Ensembl"/>
</dbReference>
<dbReference type="GO" id="GO:0005829">
    <property type="term" value="C:cytosol"/>
    <property type="evidence" value="ECO:0007669"/>
    <property type="project" value="Ensembl"/>
</dbReference>
<dbReference type="GO" id="GO:0005828">
    <property type="term" value="C:kinetochore microtubule"/>
    <property type="evidence" value="ECO:0007669"/>
    <property type="project" value="Ensembl"/>
</dbReference>
<dbReference type="GO" id="GO:0005634">
    <property type="term" value="C:nucleus"/>
    <property type="evidence" value="ECO:0007669"/>
    <property type="project" value="UniProtKB-SubCell"/>
</dbReference>
<dbReference type="GO" id="GO:0005886">
    <property type="term" value="C:plasma membrane"/>
    <property type="evidence" value="ECO:0007669"/>
    <property type="project" value="Ensembl"/>
</dbReference>
<dbReference type="GO" id="GO:1990423">
    <property type="term" value="C:RZZ complex"/>
    <property type="evidence" value="ECO:0007669"/>
    <property type="project" value="Ensembl"/>
</dbReference>
<dbReference type="GO" id="GO:0000922">
    <property type="term" value="C:spindle pole"/>
    <property type="evidence" value="ECO:0007669"/>
    <property type="project" value="Ensembl"/>
</dbReference>
<dbReference type="GO" id="GO:0051301">
    <property type="term" value="P:cell division"/>
    <property type="evidence" value="ECO:0007669"/>
    <property type="project" value="UniProtKB-KW"/>
</dbReference>
<dbReference type="GO" id="GO:0007094">
    <property type="term" value="P:mitotic spindle assembly checkpoint signaling"/>
    <property type="evidence" value="ECO:0007669"/>
    <property type="project" value="Ensembl"/>
</dbReference>
<dbReference type="InterPro" id="IPR055403">
    <property type="entry name" value="ARM_KNTC1_1st"/>
</dbReference>
<dbReference type="InterPro" id="IPR055404">
    <property type="entry name" value="ARM_KNTC1_2nd"/>
</dbReference>
<dbReference type="InterPro" id="IPR055405">
    <property type="entry name" value="ARM_KNTC1_3rd"/>
</dbReference>
<dbReference type="InterPro" id="IPR052802">
    <property type="entry name" value="KNTC1"/>
</dbReference>
<dbReference type="InterPro" id="IPR055402">
    <property type="entry name" value="KNTC1_N"/>
</dbReference>
<dbReference type="InterPro" id="IPR019527">
    <property type="entry name" value="RZZ-complex_KNTC1/ROD_C"/>
</dbReference>
<dbReference type="InterPro" id="IPR036322">
    <property type="entry name" value="WD40_repeat_dom_sf"/>
</dbReference>
<dbReference type="PANTHER" id="PTHR15688">
    <property type="entry name" value="KINETOCHORE-ASSOCIATED PROTEIN 1"/>
    <property type="match status" value="1"/>
</dbReference>
<dbReference type="PANTHER" id="PTHR15688:SF1">
    <property type="entry name" value="KINETOCHORE-ASSOCIATED PROTEIN 1"/>
    <property type="match status" value="1"/>
</dbReference>
<dbReference type="Pfam" id="PF24520">
    <property type="entry name" value="ARM_KNTC1_1st"/>
    <property type="match status" value="1"/>
</dbReference>
<dbReference type="Pfam" id="PF24516">
    <property type="entry name" value="ARM_KNTC1_2nd"/>
    <property type="match status" value="1"/>
</dbReference>
<dbReference type="Pfam" id="PF24515">
    <property type="entry name" value="ARM_KNTC1_3rd"/>
    <property type="match status" value="1"/>
</dbReference>
<dbReference type="Pfam" id="PF24506">
    <property type="entry name" value="KNTC1_N"/>
    <property type="match status" value="1"/>
</dbReference>
<dbReference type="Pfam" id="PF10493">
    <property type="entry name" value="Rod_C"/>
    <property type="match status" value="1"/>
</dbReference>
<dbReference type="SUPFAM" id="SSF50978">
    <property type="entry name" value="WD40 repeat-like"/>
    <property type="match status" value="1"/>
</dbReference>
<organism>
    <name type="scientific">Mus musculus</name>
    <name type="common">Mouse</name>
    <dbReference type="NCBI Taxonomy" id="10090"/>
    <lineage>
        <taxon>Eukaryota</taxon>
        <taxon>Metazoa</taxon>
        <taxon>Chordata</taxon>
        <taxon>Craniata</taxon>
        <taxon>Vertebrata</taxon>
        <taxon>Euteleostomi</taxon>
        <taxon>Mammalia</taxon>
        <taxon>Eutheria</taxon>
        <taxon>Euarchontoglires</taxon>
        <taxon>Glires</taxon>
        <taxon>Rodentia</taxon>
        <taxon>Myomorpha</taxon>
        <taxon>Muroidea</taxon>
        <taxon>Muridae</taxon>
        <taxon>Murinae</taxon>
        <taxon>Mus</taxon>
        <taxon>Mus</taxon>
    </lineage>
</organism>